<feature type="chain" id="PRO_0000397688" description="E3 ubiquitin-protein ligase Os06g0535400">
    <location>
        <begin position="1"/>
        <end position="251"/>
    </location>
</feature>
<feature type="transmembrane region" description="Helical" evidence="1">
    <location>
        <begin position="28"/>
        <end position="48"/>
    </location>
</feature>
<feature type="transmembrane region" description="Helical" evidence="1">
    <location>
        <begin position="102"/>
        <end position="122"/>
    </location>
</feature>
<feature type="transmembrane region" description="Helical" evidence="1">
    <location>
        <begin position="127"/>
        <end position="147"/>
    </location>
</feature>
<feature type="zinc finger region" description="RING-type; atypical" evidence="2">
    <location>
        <begin position="185"/>
        <end position="227"/>
    </location>
</feature>
<keyword id="KW-0472">Membrane</keyword>
<keyword id="KW-0479">Metal-binding</keyword>
<keyword id="KW-1185">Reference proteome</keyword>
<keyword id="KW-0808">Transferase</keyword>
<keyword id="KW-0812">Transmembrane</keyword>
<keyword id="KW-1133">Transmembrane helix</keyword>
<keyword id="KW-0833">Ubl conjugation pathway</keyword>
<keyword id="KW-0862">Zinc</keyword>
<keyword id="KW-0863">Zinc-finger</keyword>
<gene>
    <name type="ordered locus">Os06g0535400</name>
    <name type="ordered locus">LOC_Os06g34450</name>
    <name type="ORF">OSJNBa0001B21.23</name>
</gene>
<comment type="function">
    <text evidence="3">Possesses E3 ubiquitin-protein ligase in vitro.</text>
</comment>
<comment type="catalytic activity">
    <reaction evidence="4">
        <text>S-ubiquitinyl-[E2 ubiquitin-conjugating enzyme]-L-cysteine + [acceptor protein]-L-lysine = [E2 ubiquitin-conjugating enzyme]-L-cysteine + N(6)-ubiquitinyl-[acceptor protein]-L-lysine.</text>
        <dbReference type="EC" id="2.3.2.27"/>
    </reaction>
</comment>
<comment type="pathway">
    <text>Protein modification; protein ubiquitination.</text>
</comment>
<comment type="subcellular location">
    <subcellularLocation>
        <location evidence="4">Membrane</location>
        <topology evidence="4">Multi-pass membrane protein</topology>
    </subcellularLocation>
</comment>
<proteinExistence type="evidence at transcript level"/>
<name>ATL61_ORYSJ</name>
<dbReference type="EC" id="2.3.2.27" evidence="4"/>
<dbReference type="EMBL" id="AP005723">
    <property type="protein sequence ID" value="BAD54617.1"/>
    <property type="molecule type" value="Genomic_DNA"/>
</dbReference>
<dbReference type="EMBL" id="AP008212">
    <property type="protein sequence ID" value="BAF19705.1"/>
    <property type="molecule type" value="Genomic_DNA"/>
</dbReference>
<dbReference type="EMBL" id="AP014962">
    <property type="protein sequence ID" value="BAS98092.1"/>
    <property type="molecule type" value="Genomic_DNA"/>
</dbReference>
<dbReference type="EMBL" id="AK066960">
    <property type="protein sequence ID" value="BAG90201.1"/>
    <property type="molecule type" value="mRNA"/>
</dbReference>
<dbReference type="RefSeq" id="XP_015641590.1">
    <property type="nucleotide sequence ID" value="XM_015786104.1"/>
</dbReference>
<dbReference type="SMR" id="Q5Z5F2"/>
<dbReference type="FunCoup" id="Q5Z5F2">
    <property type="interactions" value="743"/>
</dbReference>
<dbReference type="STRING" id="39947.Q5Z5F2"/>
<dbReference type="PaxDb" id="39947-Q5Z5F2"/>
<dbReference type="EnsemblPlants" id="Os06t0535400-01">
    <property type="protein sequence ID" value="Os06t0535400-01"/>
    <property type="gene ID" value="Os06g0535400"/>
</dbReference>
<dbReference type="Gramene" id="Os06t0535400-01">
    <property type="protein sequence ID" value="Os06t0535400-01"/>
    <property type="gene ID" value="Os06g0535400"/>
</dbReference>
<dbReference type="KEGG" id="dosa:Os06g0535400"/>
<dbReference type="eggNOG" id="KOG0800">
    <property type="taxonomic scope" value="Eukaryota"/>
</dbReference>
<dbReference type="HOGENOM" id="CLU_099207_0_0_1"/>
<dbReference type="InParanoid" id="Q5Z5F2"/>
<dbReference type="OMA" id="LPRCAHR"/>
<dbReference type="OrthoDB" id="689405at2759"/>
<dbReference type="UniPathway" id="UPA00143"/>
<dbReference type="Proteomes" id="UP000000763">
    <property type="component" value="Chromosome 6"/>
</dbReference>
<dbReference type="Proteomes" id="UP000059680">
    <property type="component" value="Chromosome 6"/>
</dbReference>
<dbReference type="GO" id="GO:0016020">
    <property type="term" value="C:membrane"/>
    <property type="evidence" value="ECO:0007669"/>
    <property type="project" value="UniProtKB-SubCell"/>
</dbReference>
<dbReference type="GO" id="GO:0004842">
    <property type="term" value="F:ubiquitin-protein transferase activity"/>
    <property type="evidence" value="ECO:0000314"/>
    <property type="project" value="UniProtKB"/>
</dbReference>
<dbReference type="GO" id="GO:0008270">
    <property type="term" value="F:zinc ion binding"/>
    <property type="evidence" value="ECO:0007669"/>
    <property type="project" value="UniProtKB-KW"/>
</dbReference>
<dbReference type="GO" id="GO:0016567">
    <property type="term" value="P:protein ubiquitination"/>
    <property type="evidence" value="ECO:0000314"/>
    <property type="project" value="UniProtKB"/>
</dbReference>
<dbReference type="Gene3D" id="3.30.40.10">
    <property type="entry name" value="Zinc/RING finger domain, C3HC4 (zinc finger)"/>
    <property type="match status" value="1"/>
</dbReference>
<dbReference type="InterPro" id="IPR001841">
    <property type="entry name" value="Znf_RING"/>
</dbReference>
<dbReference type="InterPro" id="IPR013083">
    <property type="entry name" value="Znf_RING/FYVE/PHD"/>
</dbReference>
<dbReference type="PANTHER" id="PTHR46539">
    <property type="entry name" value="E3 UBIQUITIN-PROTEIN LIGASE ATL42"/>
    <property type="match status" value="1"/>
</dbReference>
<dbReference type="PANTHER" id="PTHR46539:SF9">
    <property type="entry name" value="RING-H2 FINGER PROTEIN ATL56"/>
    <property type="match status" value="1"/>
</dbReference>
<dbReference type="Pfam" id="PF13639">
    <property type="entry name" value="zf-RING_2"/>
    <property type="match status" value="1"/>
</dbReference>
<dbReference type="SMART" id="SM00184">
    <property type="entry name" value="RING"/>
    <property type="match status" value="1"/>
</dbReference>
<dbReference type="SUPFAM" id="SSF57850">
    <property type="entry name" value="RING/U-box"/>
    <property type="match status" value="1"/>
</dbReference>
<dbReference type="PROSITE" id="PS50089">
    <property type="entry name" value="ZF_RING_2"/>
    <property type="match status" value="1"/>
</dbReference>
<protein>
    <recommendedName>
        <fullName>E3 ubiquitin-protein ligase Os06g0535400</fullName>
        <ecNumber evidence="4">2.3.2.27</ecNumber>
    </recommendedName>
    <alternativeName>
        <fullName>RING-H2 finger protein Os06g0535400</fullName>
    </alternativeName>
    <alternativeName>
        <fullName evidence="4">RING-type E3 ubiquitin transferase Os06g0535400</fullName>
    </alternativeName>
</protein>
<sequence>MELPWLDLPFTLLTLLLATRLAYDYYGVVAATFTGSFSLQIFLFYCFARWYRHTIAARAAADADGDGGGGAVADEEAAPPVLIPLLEGRGGGGGGAGAASSLANRCFAVVFMVFVPLVIVVFERSQADVVAYALCLANILVMVVWLSPDAAADPASAAKSFLRLSDDEDEGSCSGSGHGAAEDKCCVCLAGMREAQALRDLPRCGHRFHAKCIGKWLTAHPTCPVCRTTAVPPPAPLPASGDHADDAITPV</sequence>
<evidence type="ECO:0000255" key="1"/>
<evidence type="ECO:0000255" key="2">
    <source>
        <dbReference type="PROSITE-ProRule" id="PRU00175"/>
    </source>
</evidence>
<evidence type="ECO:0000269" key="3">
    <source>
    </source>
</evidence>
<evidence type="ECO:0000305" key="4"/>
<organism>
    <name type="scientific">Oryza sativa subsp. japonica</name>
    <name type="common">Rice</name>
    <dbReference type="NCBI Taxonomy" id="39947"/>
    <lineage>
        <taxon>Eukaryota</taxon>
        <taxon>Viridiplantae</taxon>
        <taxon>Streptophyta</taxon>
        <taxon>Embryophyta</taxon>
        <taxon>Tracheophyta</taxon>
        <taxon>Spermatophyta</taxon>
        <taxon>Magnoliopsida</taxon>
        <taxon>Liliopsida</taxon>
        <taxon>Poales</taxon>
        <taxon>Poaceae</taxon>
        <taxon>BOP clade</taxon>
        <taxon>Oryzoideae</taxon>
        <taxon>Oryzeae</taxon>
        <taxon>Oryzinae</taxon>
        <taxon>Oryza</taxon>
        <taxon>Oryza sativa</taxon>
    </lineage>
</organism>
<reference key="1">
    <citation type="journal article" date="2005" name="Nature">
        <title>The map-based sequence of the rice genome.</title>
        <authorList>
            <consortium name="International rice genome sequencing project (IRGSP)"/>
        </authorList>
    </citation>
    <scope>NUCLEOTIDE SEQUENCE [LARGE SCALE GENOMIC DNA]</scope>
    <source>
        <strain>cv. Nipponbare</strain>
    </source>
</reference>
<reference key="2">
    <citation type="journal article" date="2008" name="Nucleic Acids Res.">
        <title>The rice annotation project database (RAP-DB): 2008 update.</title>
        <authorList>
            <consortium name="The rice annotation project (RAP)"/>
        </authorList>
    </citation>
    <scope>GENOME REANNOTATION</scope>
    <source>
        <strain>cv. Nipponbare</strain>
    </source>
</reference>
<reference key="3">
    <citation type="journal article" date="2013" name="Rice">
        <title>Improvement of the Oryza sativa Nipponbare reference genome using next generation sequence and optical map data.</title>
        <authorList>
            <person name="Kawahara Y."/>
            <person name="de la Bastide M."/>
            <person name="Hamilton J.P."/>
            <person name="Kanamori H."/>
            <person name="McCombie W.R."/>
            <person name="Ouyang S."/>
            <person name="Schwartz D.C."/>
            <person name="Tanaka T."/>
            <person name="Wu J."/>
            <person name="Zhou S."/>
            <person name="Childs K.L."/>
            <person name="Davidson R.M."/>
            <person name="Lin H."/>
            <person name="Quesada-Ocampo L."/>
            <person name="Vaillancourt B."/>
            <person name="Sakai H."/>
            <person name="Lee S.S."/>
            <person name="Kim J."/>
            <person name="Numa H."/>
            <person name="Itoh T."/>
            <person name="Buell C.R."/>
            <person name="Matsumoto T."/>
        </authorList>
    </citation>
    <scope>GENOME REANNOTATION</scope>
    <source>
        <strain>cv. Nipponbare</strain>
    </source>
</reference>
<reference key="4">
    <citation type="journal article" date="2003" name="Science">
        <title>Collection, mapping, and annotation of over 28,000 cDNA clones from japonica rice.</title>
        <authorList>
            <consortium name="The rice full-length cDNA consortium"/>
        </authorList>
    </citation>
    <scope>NUCLEOTIDE SEQUENCE [LARGE SCALE MRNA]</scope>
    <source>
        <strain>cv. Nipponbare</strain>
    </source>
</reference>
<reference key="5">
    <citation type="journal article" date="2005" name="J. Biol. Chem.">
        <title>Active site residues and amino acid specificity of the ubiquitin carrier protein-binding RING-H2 finger domain.</title>
        <authorList>
            <person name="Katoh S."/>
            <person name="Tsunoda Y."/>
            <person name="Murata K."/>
            <person name="Minami E."/>
            <person name="Katoh E."/>
        </authorList>
    </citation>
    <scope>FUNCTION</scope>
</reference>
<accession>Q5Z5F2</accession>
<accession>A0A0P0WXD8</accession>